<protein>
    <recommendedName>
        <fullName evidence="1">Succinate--CoA ligase [ADP-forming] subunit alpha</fullName>
        <ecNumber evidence="1">6.2.1.5</ecNumber>
    </recommendedName>
    <alternativeName>
        <fullName evidence="1">Succinyl-CoA synthetase subunit alpha</fullName>
        <shortName evidence="1">SCS-alpha</shortName>
    </alternativeName>
</protein>
<gene>
    <name evidence="1" type="primary">sucD</name>
    <name type="ordered locus">SAR1222</name>
</gene>
<evidence type="ECO:0000255" key="1">
    <source>
        <dbReference type="HAMAP-Rule" id="MF_01988"/>
    </source>
</evidence>
<feature type="chain" id="PRO_0000102802" description="Succinate--CoA ligase [ADP-forming] subunit alpha">
    <location>
        <begin position="1"/>
        <end position="302"/>
    </location>
</feature>
<feature type="active site" description="Tele-phosphohistidine intermediate" evidence="1">
    <location>
        <position position="247"/>
    </location>
</feature>
<feature type="binding site" evidence="1">
    <location>
        <begin position="17"/>
        <end position="20"/>
    </location>
    <ligand>
        <name>CoA</name>
        <dbReference type="ChEBI" id="CHEBI:57287"/>
    </ligand>
</feature>
<feature type="binding site" evidence="1">
    <location>
        <position position="43"/>
    </location>
    <ligand>
        <name>CoA</name>
        <dbReference type="ChEBI" id="CHEBI:57287"/>
    </ligand>
</feature>
<feature type="binding site" evidence="1">
    <location>
        <begin position="96"/>
        <end position="98"/>
    </location>
    <ligand>
        <name>CoA</name>
        <dbReference type="ChEBI" id="CHEBI:57287"/>
    </ligand>
</feature>
<feature type="binding site" evidence="1">
    <location>
        <position position="159"/>
    </location>
    <ligand>
        <name>substrate</name>
        <note>ligand shared with subunit beta</note>
    </ligand>
</feature>
<organism>
    <name type="scientific">Staphylococcus aureus (strain MRSA252)</name>
    <dbReference type="NCBI Taxonomy" id="282458"/>
    <lineage>
        <taxon>Bacteria</taxon>
        <taxon>Bacillati</taxon>
        <taxon>Bacillota</taxon>
        <taxon>Bacilli</taxon>
        <taxon>Bacillales</taxon>
        <taxon>Staphylococcaceae</taxon>
        <taxon>Staphylococcus</taxon>
    </lineage>
</organism>
<name>SUCD_STAAR</name>
<dbReference type="EC" id="6.2.1.5" evidence="1"/>
<dbReference type="EMBL" id="BX571856">
    <property type="protein sequence ID" value="CAG40224.1"/>
    <property type="molecule type" value="Genomic_DNA"/>
</dbReference>
<dbReference type="RefSeq" id="WP_000110252.1">
    <property type="nucleotide sequence ID" value="NC_002952.2"/>
</dbReference>
<dbReference type="SMR" id="Q6GHI9"/>
<dbReference type="KEGG" id="sar:SAR1222"/>
<dbReference type="HOGENOM" id="CLU_052104_0_0_9"/>
<dbReference type="UniPathway" id="UPA00223">
    <property type="reaction ID" value="UER00999"/>
</dbReference>
<dbReference type="Proteomes" id="UP000000596">
    <property type="component" value="Chromosome"/>
</dbReference>
<dbReference type="GO" id="GO:0005829">
    <property type="term" value="C:cytosol"/>
    <property type="evidence" value="ECO:0007669"/>
    <property type="project" value="TreeGrafter"/>
</dbReference>
<dbReference type="GO" id="GO:0009361">
    <property type="term" value="C:succinate-CoA ligase complex (ADP-forming)"/>
    <property type="evidence" value="ECO:0007669"/>
    <property type="project" value="TreeGrafter"/>
</dbReference>
<dbReference type="GO" id="GO:0000166">
    <property type="term" value="F:nucleotide binding"/>
    <property type="evidence" value="ECO:0007669"/>
    <property type="project" value="UniProtKB-KW"/>
</dbReference>
<dbReference type="GO" id="GO:0004775">
    <property type="term" value="F:succinate-CoA ligase (ADP-forming) activity"/>
    <property type="evidence" value="ECO:0007669"/>
    <property type="project" value="UniProtKB-UniRule"/>
</dbReference>
<dbReference type="GO" id="GO:0004776">
    <property type="term" value="F:succinate-CoA ligase (GDP-forming) activity"/>
    <property type="evidence" value="ECO:0007669"/>
    <property type="project" value="RHEA"/>
</dbReference>
<dbReference type="GO" id="GO:0006099">
    <property type="term" value="P:tricarboxylic acid cycle"/>
    <property type="evidence" value="ECO:0007669"/>
    <property type="project" value="UniProtKB-UniRule"/>
</dbReference>
<dbReference type="FunFam" id="3.40.50.261:FF:000002">
    <property type="entry name" value="Succinate--CoA ligase [ADP-forming] subunit alpha"/>
    <property type="match status" value="1"/>
</dbReference>
<dbReference type="FunFam" id="3.40.50.720:FF:000002">
    <property type="entry name" value="Succinate--CoA ligase [ADP-forming] subunit alpha"/>
    <property type="match status" value="1"/>
</dbReference>
<dbReference type="Gene3D" id="3.40.50.720">
    <property type="entry name" value="NAD(P)-binding Rossmann-like Domain"/>
    <property type="match status" value="1"/>
</dbReference>
<dbReference type="Gene3D" id="3.40.50.261">
    <property type="entry name" value="Succinyl-CoA synthetase domains"/>
    <property type="match status" value="1"/>
</dbReference>
<dbReference type="HAMAP" id="MF_01988">
    <property type="entry name" value="Succ_CoA_alpha"/>
    <property type="match status" value="1"/>
</dbReference>
<dbReference type="InterPro" id="IPR017440">
    <property type="entry name" value="Cit_synth/succinyl-CoA_lig_AS"/>
</dbReference>
<dbReference type="InterPro" id="IPR033847">
    <property type="entry name" value="Citrt_syn/SCS-alpha_CS"/>
</dbReference>
<dbReference type="InterPro" id="IPR003781">
    <property type="entry name" value="CoA-bd"/>
</dbReference>
<dbReference type="InterPro" id="IPR005810">
    <property type="entry name" value="CoA_lig_alpha"/>
</dbReference>
<dbReference type="InterPro" id="IPR036291">
    <property type="entry name" value="NAD(P)-bd_dom_sf"/>
</dbReference>
<dbReference type="InterPro" id="IPR005811">
    <property type="entry name" value="SUCC_ACL_C"/>
</dbReference>
<dbReference type="InterPro" id="IPR016102">
    <property type="entry name" value="Succinyl-CoA_synth-like"/>
</dbReference>
<dbReference type="NCBIfam" id="NF004230">
    <property type="entry name" value="PRK05678.1"/>
    <property type="match status" value="1"/>
</dbReference>
<dbReference type="NCBIfam" id="TIGR01019">
    <property type="entry name" value="sucCoAalpha"/>
    <property type="match status" value="1"/>
</dbReference>
<dbReference type="PANTHER" id="PTHR11117:SF2">
    <property type="entry name" value="SUCCINATE--COA LIGASE [ADP_GDP-FORMING] SUBUNIT ALPHA, MITOCHONDRIAL"/>
    <property type="match status" value="1"/>
</dbReference>
<dbReference type="PANTHER" id="PTHR11117">
    <property type="entry name" value="SUCCINYL-COA LIGASE SUBUNIT ALPHA"/>
    <property type="match status" value="1"/>
</dbReference>
<dbReference type="Pfam" id="PF02629">
    <property type="entry name" value="CoA_binding"/>
    <property type="match status" value="1"/>
</dbReference>
<dbReference type="Pfam" id="PF00549">
    <property type="entry name" value="Ligase_CoA"/>
    <property type="match status" value="1"/>
</dbReference>
<dbReference type="PIRSF" id="PIRSF001553">
    <property type="entry name" value="SucCS_alpha"/>
    <property type="match status" value="1"/>
</dbReference>
<dbReference type="PRINTS" id="PR01798">
    <property type="entry name" value="SCOASYNTHASE"/>
</dbReference>
<dbReference type="SMART" id="SM00881">
    <property type="entry name" value="CoA_binding"/>
    <property type="match status" value="1"/>
</dbReference>
<dbReference type="SUPFAM" id="SSF51735">
    <property type="entry name" value="NAD(P)-binding Rossmann-fold domains"/>
    <property type="match status" value="1"/>
</dbReference>
<dbReference type="SUPFAM" id="SSF52210">
    <property type="entry name" value="Succinyl-CoA synthetase domains"/>
    <property type="match status" value="1"/>
</dbReference>
<dbReference type="PROSITE" id="PS01216">
    <property type="entry name" value="SUCCINYL_COA_LIG_1"/>
    <property type="match status" value="1"/>
</dbReference>
<dbReference type="PROSITE" id="PS00399">
    <property type="entry name" value="SUCCINYL_COA_LIG_2"/>
    <property type="match status" value="1"/>
</dbReference>
<keyword id="KW-0436">Ligase</keyword>
<keyword id="KW-0547">Nucleotide-binding</keyword>
<keyword id="KW-0816">Tricarboxylic acid cycle</keyword>
<sequence length="302" mass="31568">MSVFIDKNTKVMVQGITGSTALFHTKQMLDYGTKIVAGVTPGKGGQVVEGVPVFNTVEEAKNETGATVSVIYVPAPFAADSILEAADADLDMVICITEHIPVLDMVKVKRYLQGRKTRLVGPNCPGVITADECKIGIMPGYIHKKGHVGVVSRSGTLTYEAVHQLTEEGIGQTTAVGIGGDPVNGTNFIDVLKAFNEDDETKAVVMIGEIGGTAEEEAAEWIKANMTKPVVGFIGGQTAPPGKRMGHAGAIISGGKGTAEEKIKTLNSCGVKTAATPSEIGSTLIEAAKEAGIYELLLTVNK</sequence>
<proteinExistence type="inferred from homology"/>
<accession>Q6GHI9</accession>
<comment type="function">
    <text evidence="1">Succinyl-CoA synthetase functions in the citric acid cycle (TCA), coupling the hydrolysis of succinyl-CoA to the synthesis of either ATP or GTP and thus represents the only step of substrate-level phosphorylation in the TCA. The alpha subunit of the enzyme binds the substrates coenzyme A and phosphate, while succinate binding and nucleotide specificity is provided by the beta subunit.</text>
</comment>
<comment type="catalytic activity">
    <reaction evidence="1">
        <text>succinate + ATP + CoA = succinyl-CoA + ADP + phosphate</text>
        <dbReference type="Rhea" id="RHEA:17661"/>
        <dbReference type="ChEBI" id="CHEBI:30031"/>
        <dbReference type="ChEBI" id="CHEBI:30616"/>
        <dbReference type="ChEBI" id="CHEBI:43474"/>
        <dbReference type="ChEBI" id="CHEBI:57287"/>
        <dbReference type="ChEBI" id="CHEBI:57292"/>
        <dbReference type="ChEBI" id="CHEBI:456216"/>
        <dbReference type="EC" id="6.2.1.5"/>
    </reaction>
    <physiologicalReaction direction="right-to-left" evidence="1">
        <dbReference type="Rhea" id="RHEA:17663"/>
    </physiologicalReaction>
</comment>
<comment type="catalytic activity">
    <reaction evidence="1">
        <text>GTP + succinate + CoA = succinyl-CoA + GDP + phosphate</text>
        <dbReference type="Rhea" id="RHEA:22120"/>
        <dbReference type="ChEBI" id="CHEBI:30031"/>
        <dbReference type="ChEBI" id="CHEBI:37565"/>
        <dbReference type="ChEBI" id="CHEBI:43474"/>
        <dbReference type="ChEBI" id="CHEBI:57287"/>
        <dbReference type="ChEBI" id="CHEBI:57292"/>
        <dbReference type="ChEBI" id="CHEBI:58189"/>
    </reaction>
    <physiologicalReaction direction="right-to-left" evidence="1">
        <dbReference type="Rhea" id="RHEA:22122"/>
    </physiologicalReaction>
</comment>
<comment type="pathway">
    <text evidence="1">Carbohydrate metabolism; tricarboxylic acid cycle; succinate from succinyl-CoA (ligase route): step 1/1.</text>
</comment>
<comment type="subunit">
    <text evidence="1">Heterotetramer of two alpha and two beta subunits.</text>
</comment>
<comment type="similarity">
    <text evidence="1">Belongs to the succinate/malate CoA ligase alpha subunit family.</text>
</comment>
<reference key="1">
    <citation type="journal article" date="2004" name="Proc. Natl. Acad. Sci. U.S.A.">
        <title>Complete genomes of two clinical Staphylococcus aureus strains: evidence for the rapid evolution of virulence and drug resistance.</title>
        <authorList>
            <person name="Holden M.T.G."/>
            <person name="Feil E.J."/>
            <person name="Lindsay J.A."/>
            <person name="Peacock S.J."/>
            <person name="Day N.P.J."/>
            <person name="Enright M.C."/>
            <person name="Foster T.J."/>
            <person name="Moore C.E."/>
            <person name="Hurst L."/>
            <person name="Atkin R."/>
            <person name="Barron A."/>
            <person name="Bason N."/>
            <person name="Bentley S.D."/>
            <person name="Chillingworth C."/>
            <person name="Chillingworth T."/>
            <person name="Churcher C."/>
            <person name="Clark L."/>
            <person name="Corton C."/>
            <person name="Cronin A."/>
            <person name="Doggett J."/>
            <person name="Dowd L."/>
            <person name="Feltwell T."/>
            <person name="Hance Z."/>
            <person name="Harris B."/>
            <person name="Hauser H."/>
            <person name="Holroyd S."/>
            <person name="Jagels K."/>
            <person name="James K.D."/>
            <person name="Lennard N."/>
            <person name="Line A."/>
            <person name="Mayes R."/>
            <person name="Moule S."/>
            <person name="Mungall K."/>
            <person name="Ormond D."/>
            <person name="Quail M.A."/>
            <person name="Rabbinowitsch E."/>
            <person name="Rutherford K.M."/>
            <person name="Sanders M."/>
            <person name="Sharp S."/>
            <person name="Simmonds M."/>
            <person name="Stevens K."/>
            <person name="Whitehead S."/>
            <person name="Barrell B.G."/>
            <person name="Spratt B.G."/>
            <person name="Parkhill J."/>
        </authorList>
    </citation>
    <scope>NUCLEOTIDE SEQUENCE [LARGE SCALE GENOMIC DNA]</scope>
    <source>
        <strain>MRSA252</strain>
    </source>
</reference>